<proteinExistence type="inferred from homology"/>
<name>SYGB_MOOTA</name>
<gene>
    <name evidence="1" type="primary">glyS</name>
    <name type="ordered locus">Moth_0604</name>
</gene>
<accession>Q2RKV5</accession>
<feature type="chain" id="PRO_1000101303" description="Glycine--tRNA ligase beta subunit">
    <location>
        <begin position="1"/>
        <end position="694"/>
    </location>
</feature>
<comment type="catalytic activity">
    <reaction evidence="1">
        <text>tRNA(Gly) + glycine + ATP = glycyl-tRNA(Gly) + AMP + diphosphate</text>
        <dbReference type="Rhea" id="RHEA:16013"/>
        <dbReference type="Rhea" id="RHEA-COMP:9664"/>
        <dbReference type="Rhea" id="RHEA-COMP:9683"/>
        <dbReference type="ChEBI" id="CHEBI:30616"/>
        <dbReference type="ChEBI" id="CHEBI:33019"/>
        <dbReference type="ChEBI" id="CHEBI:57305"/>
        <dbReference type="ChEBI" id="CHEBI:78442"/>
        <dbReference type="ChEBI" id="CHEBI:78522"/>
        <dbReference type="ChEBI" id="CHEBI:456215"/>
        <dbReference type="EC" id="6.1.1.14"/>
    </reaction>
</comment>
<comment type="subunit">
    <text evidence="1">Tetramer of two alpha and two beta subunits.</text>
</comment>
<comment type="subcellular location">
    <subcellularLocation>
        <location evidence="1">Cytoplasm</location>
    </subcellularLocation>
</comment>
<comment type="similarity">
    <text evidence="1">Belongs to the class-II aminoacyl-tRNA synthetase family.</text>
</comment>
<dbReference type="EC" id="6.1.1.14" evidence="1"/>
<dbReference type="EMBL" id="CP000232">
    <property type="protein sequence ID" value="ABC18934.1"/>
    <property type="molecule type" value="Genomic_DNA"/>
</dbReference>
<dbReference type="RefSeq" id="YP_429477.1">
    <property type="nucleotide sequence ID" value="NC_007644.1"/>
</dbReference>
<dbReference type="SMR" id="Q2RKV5"/>
<dbReference type="STRING" id="264732.Moth_0604"/>
<dbReference type="EnsemblBacteria" id="ABC18934">
    <property type="protein sequence ID" value="ABC18934"/>
    <property type="gene ID" value="Moth_0604"/>
</dbReference>
<dbReference type="KEGG" id="mta:Moth_0604"/>
<dbReference type="PATRIC" id="fig|264732.11.peg.649"/>
<dbReference type="eggNOG" id="COG0751">
    <property type="taxonomic scope" value="Bacteria"/>
</dbReference>
<dbReference type="HOGENOM" id="CLU_007220_2_2_9"/>
<dbReference type="OrthoDB" id="9775440at2"/>
<dbReference type="GO" id="GO:0005829">
    <property type="term" value="C:cytosol"/>
    <property type="evidence" value="ECO:0007669"/>
    <property type="project" value="TreeGrafter"/>
</dbReference>
<dbReference type="GO" id="GO:0004814">
    <property type="term" value="F:arginine-tRNA ligase activity"/>
    <property type="evidence" value="ECO:0007669"/>
    <property type="project" value="InterPro"/>
</dbReference>
<dbReference type="GO" id="GO:0005524">
    <property type="term" value="F:ATP binding"/>
    <property type="evidence" value="ECO:0007669"/>
    <property type="project" value="UniProtKB-UniRule"/>
</dbReference>
<dbReference type="GO" id="GO:0004820">
    <property type="term" value="F:glycine-tRNA ligase activity"/>
    <property type="evidence" value="ECO:0007669"/>
    <property type="project" value="UniProtKB-UniRule"/>
</dbReference>
<dbReference type="GO" id="GO:0006420">
    <property type="term" value="P:arginyl-tRNA aminoacylation"/>
    <property type="evidence" value="ECO:0007669"/>
    <property type="project" value="InterPro"/>
</dbReference>
<dbReference type="GO" id="GO:0006426">
    <property type="term" value="P:glycyl-tRNA aminoacylation"/>
    <property type="evidence" value="ECO:0007669"/>
    <property type="project" value="UniProtKB-UniRule"/>
</dbReference>
<dbReference type="HAMAP" id="MF_00255">
    <property type="entry name" value="Gly_tRNA_synth_beta"/>
    <property type="match status" value="1"/>
</dbReference>
<dbReference type="InterPro" id="IPR008909">
    <property type="entry name" value="DALR_anticod-bd"/>
</dbReference>
<dbReference type="InterPro" id="IPR015944">
    <property type="entry name" value="Gly-tRNA-synth_bsu"/>
</dbReference>
<dbReference type="InterPro" id="IPR006194">
    <property type="entry name" value="Gly-tRNA-synth_heterodimer"/>
</dbReference>
<dbReference type="NCBIfam" id="TIGR00211">
    <property type="entry name" value="glyS"/>
    <property type="match status" value="1"/>
</dbReference>
<dbReference type="PANTHER" id="PTHR30075:SF2">
    <property type="entry name" value="GLYCINE--TRNA LIGASE, CHLOROPLASTIC_MITOCHONDRIAL 2"/>
    <property type="match status" value="1"/>
</dbReference>
<dbReference type="PANTHER" id="PTHR30075">
    <property type="entry name" value="GLYCYL-TRNA SYNTHETASE"/>
    <property type="match status" value="1"/>
</dbReference>
<dbReference type="Pfam" id="PF05746">
    <property type="entry name" value="DALR_1"/>
    <property type="match status" value="1"/>
</dbReference>
<dbReference type="Pfam" id="PF02092">
    <property type="entry name" value="tRNA_synt_2f"/>
    <property type="match status" value="1"/>
</dbReference>
<dbReference type="PRINTS" id="PR01045">
    <property type="entry name" value="TRNASYNTHGB"/>
</dbReference>
<dbReference type="SUPFAM" id="SSF109604">
    <property type="entry name" value="HD-domain/PDEase-like"/>
    <property type="match status" value="1"/>
</dbReference>
<dbReference type="PROSITE" id="PS50861">
    <property type="entry name" value="AA_TRNA_LIGASE_II_GLYAB"/>
    <property type="match status" value="1"/>
</dbReference>
<keyword id="KW-0030">Aminoacyl-tRNA synthetase</keyword>
<keyword id="KW-0067">ATP-binding</keyword>
<keyword id="KW-0963">Cytoplasm</keyword>
<keyword id="KW-0436">Ligase</keyword>
<keyword id="KW-0547">Nucleotide-binding</keyword>
<keyword id="KW-0648">Protein biosynthesis</keyword>
<organism>
    <name type="scientific">Moorella thermoacetica (strain ATCC 39073 / JCM 9320)</name>
    <dbReference type="NCBI Taxonomy" id="264732"/>
    <lineage>
        <taxon>Bacteria</taxon>
        <taxon>Bacillati</taxon>
        <taxon>Bacillota</taxon>
        <taxon>Clostridia</taxon>
        <taxon>Moorellales</taxon>
        <taxon>Moorellaceae</taxon>
        <taxon>Moorella</taxon>
    </lineage>
</organism>
<evidence type="ECO:0000255" key="1">
    <source>
        <dbReference type="HAMAP-Rule" id="MF_00255"/>
    </source>
</evidence>
<reference key="1">
    <citation type="journal article" date="2008" name="Environ. Microbiol.">
        <title>The complete genome sequence of Moorella thermoacetica (f. Clostridium thermoaceticum).</title>
        <authorList>
            <person name="Pierce E."/>
            <person name="Xie G."/>
            <person name="Barabote R.D."/>
            <person name="Saunders E."/>
            <person name="Han C.S."/>
            <person name="Detter J.C."/>
            <person name="Richardson P."/>
            <person name="Brettin T.S."/>
            <person name="Das A."/>
            <person name="Ljungdahl L.G."/>
            <person name="Ragsdale S.W."/>
        </authorList>
    </citation>
    <scope>NUCLEOTIDE SEQUENCE [LARGE SCALE GENOMIC DNA]</scope>
    <source>
        <strain>ATCC 39073 / JCM 9320</strain>
    </source>
</reference>
<protein>
    <recommendedName>
        <fullName evidence="1">Glycine--tRNA ligase beta subunit</fullName>
        <ecNumber evidence="1">6.1.1.14</ecNumber>
    </recommendedName>
    <alternativeName>
        <fullName evidence="1">Glycyl-tRNA synthetase beta subunit</fullName>
        <shortName evidence="1">GlyRS</shortName>
    </alternativeName>
</protein>
<sequence length="694" mass="77634">MARDLIFEIGTEEIPARFMNPALEQMAAVASQLLQEYRLPCQKVATYGTPRRLALYLTALAENQEELVQEIKGPPVKAAFTADGQPTKAALGFARSMGVAVEELVTREYNGGQYVFAIKREQGRPAVTVLPELLLAVVNALSFPKPMRWGSLEIRFARPIRWLLALFGSEVIPVELAGLTASNQTYGHRFLAPGPHQVPTASAYFQVLEENYVLVDQHRRRQLIWEQITGLASREGGRVEKDPELLEEITYLVEYPTALAGHFDPEYLKLPQEVVITPMRDHQRYFPVWNAQGELLPRFITVHNGTADHLENISRGNERVLAARLADAAFFYQEDRQTPLAAKVPKLEEIVFQESLGTMLAKTRRLQRLAVNLVNTLDLPAELVPLVERTAELAKADLVTAMVYEFPELQGIMGSYYAAHDGERAEVCQGIRQHYWPRFAGDRLPDSLTGMVVGLADRLDTLVGCFGAGLIPTGSQDPYALRRQATGVVTIAVEFNLKFSLTASIAAAYEGYTAGGIQLARPLDVVQEQLVQFCRQRLEHLLEEKGYRYDVIQACLAAGSDDLAAAYHRTRDLSAFREEEGFAALQTAFTRAFNLARQAREKYHLRPEALQEKAEAELYRALMETRHQAEPRLRAGDYLAALKAMAALRGPIDAFFDNVLVMAPDMEVRNNRLALLQAIVNLVFQIADFSRLVP</sequence>